<dbReference type="EMBL" id="D21062">
    <property type="protein sequence ID" value="BAA04641.1"/>
    <property type="molecule type" value="mRNA"/>
</dbReference>
<dbReference type="EMBL" id="AK140302">
    <property type="protein sequence ID" value="BAE24325.1"/>
    <property type="molecule type" value="mRNA"/>
</dbReference>
<dbReference type="EMBL" id="AK140464">
    <property type="protein sequence ID" value="BAE24399.1"/>
    <property type="molecule type" value="mRNA"/>
</dbReference>
<dbReference type="EMBL" id="AK158917">
    <property type="protein sequence ID" value="BAE34727.1"/>
    <property type="molecule type" value="mRNA"/>
</dbReference>
<dbReference type="EMBL" id="AL671858">
    <property type="status" value="NOT_ANNOTATED_CDS"/>
    <property type="molecule type" value="Genomic_DNA"/>
</dbReference>
<dbReference type="EMBL" id="CH466552">
    <property type="protein sequence ID" value="EDL30077.1"/>
    <property type="molecule type" value="Genomic_DNA"/>
</dbReference>
<dbReference type="EMBL" id="BC138248">
    <property type="protein sequence ID" value="AAI38249.1"/>
    <property type="molecule type" value="mRNA"/>
</dbReference>
<dbReference type="EMBL" id="BC138250">
    <property type="protein sequence ID" value="AAI38251.1"/>
    <property type="molecule type" value="mRNA"/>
</dbReference>
<dbReference type="CCDS" id="CCDS18743.1"/>
<dbReference type="PIR" id="S40454">
    <property type="entry name" value="S40454"/>
</dbReference>
<dbReference type="RefSeq" id="NP_032180.1">
    <property type="nucleotide sequence ID" value="NM_008154.3"/>
</dbReference>
<dbReference type="SMR" id="P35413"/>
<dbReference type="FunCoup" id="P35413">
    <property type="interactions" value="49"/>
</dbReference>
<dbReference type="STRING" id="10090.ENSMUSP00000101531"/>
<dbReference type="GlyCosmos" id="P35413">
    <property type="glycosylation" value="1 site, No reported glycans"/>
</dbReference>
<dbReference type="GlyGen" id="P35413">
    <property type="glycosylation" value="1 site"/>
</dbReference>
<dbReference type="PhosphoSitePlus" id="P35413"/>
<dbReference type="PaxDb" id="10090-ENSMUSP00000101531"/>
<dbReference type="Antibodypedia" id="3339">
    <property type="antibodies" value="354 antibodies from 38 providers"/>
</dbReference>
<dbReference type="DNASU" id="14748"/>
<dbReference type="Ensembl" id="ENSMUST00000052090.9">
    <property type="protein sequence ID" value="ENSMUSP00000062083.9"/>
    <property type="gene ID" value="ENSMUSG00000049649.9"/>
</dbReference>
<dbReference type="Ensembl" id="ENSMUST00000105911.2">
    <property type="protein sequence ID" value="ENSMUSP00000101531.2"/>
    <property type="gene ID" value="ENSMUSG00000049649.9"/>
</dbReference>
<dbReference type="GeneID" id="14748"/>
<dbReference type="KEGG" id="mmu:14748"/>
<dbReference type="UCSC" id="uc008vci.1">
    <property type="organism name" value="mouse"/>
</dbReference>
<dbReference type="AGR" id="MGI:101908"/>
<dbReference type="CTD" id="2827"/>
<dbReference type="MGI" id="MGI:101908">
    <property type="gene designation" value="Gpr3"/>
</dbReference>
<dbReference type="VEuPathDB" id="HostDB:ENSMUSG00000049649"/>
<dbReference type="eggNOG" id="KOG3656">
    <property type="taxonomic scope" value="Eukaryota"/>
</dbReference>
<dbReference type="GeneTree" id="ENSGT01110000267224"/>
<dbReference type="HOGENOM" id="CLU_065071_0_0_1"/>
<dbReference type="InParanoid" id="P35413"/>
<dbReference type="OMA" id="FRTPMFL"/>
<dbReference type="OrthoDB" id="10042731at2759"/>
<dbReference type="PhylomeDB" id="P35413"/>
<dbReference type="TreeFam" id="TF330052"/>
<dbReference type="BioGRID-ORCS" id="14748">
    <property type="hits" value="2 hits in 80 CRISPR screens"/>
</dbReference>
<dbReference type="PRO" id="PR:P35413"/>
<dbReference type="Proteomes" id="UP000000589">
    <property type="component" value="Chromosome 4"/>
</dbReference>
<dbReference type="RNAct" id="P35413">
    <property type="molecule type" value="protein"/>
</dbReference>
<dbReference type="Bgee" id="ENSMUSG00000049649">
    <property type="expression patterns" value="Expressed in animal zygote and 49 other cell types or tissues"/>
</dbReference>
<dbReference type="ExpressionAtlas" id="P35413">
    <property type="expression patterns" value="baseline and differential"/>
</dbReference>
<dbReference type="GO" id="GO:0005886">
    <property type="term" value="C:plasma membrane"/>
    <property type="evidence" value="ECO:0007669"/>
    <property type="project" value="UniProtKB-SubCell"/>
</dbReference>
<dbReference type="GO" id="GO:0004930">
    <property type="term" value="F:G protein-coupled receptor activity"/>
    <property type="evidence" value="ECO:0007669"/>
    <property type="project" value="UniProtKB-KW"/>
</dbReference>
<dbReference type="GO" id="GO:0120162">
    <property type="term" value="P:positive regulation of cold-induced thermogenesis"/>
    <property type="evidence" value="ECO:0000315"/>
    <property type="project" value="YuBioLab"/>
</dbReference>
<dbReference type="GO" id="GO:0040020">
    <property type="term" value="P:regulation of meiotic nuclear division"/>
    <property type="evidence" value="ECO:0000315"/>
    <property type="project" value="MGI"/>
</dbReference>
<dbReference type="CDD" id="cd15963">
    <property type="entry name" value="7tmA_GPR3"/>
    <property type="match status" value="1"/>
</dbReference>
<dbReference type="FunFam" id="1.20.1070.10:FF:000067">
    <property type="entry name" value="G-protein coupled receptor 12"/>
    <property type="match status" value="1"/>
</dbReference>
<dbReference type="Gene3D" id="1.20.1070.10">
    <property type="entry name" value="Rhodopsin 7-helix transmembrane proteins"/>
    <property type="match status" value="1"/>
</dbReference>
<dbReference type="InterPro" id="IPR000276">
    <property type="entry name" value="GPCR_Rhodpsn"/>
</dbReference>
<dbReference type="InterPro" id="IPR017452">
    <property type="entry name" value="GPCR_Rhodpsn_7TM"/>
</dbReference>
<dbReference type="InterPro" id="IPR000984">
    <property type="entry name" value="GPR3"/>
</dbReference>
<dbReference type="InterPro" id="IPR000723">
    <property type="entry name" value="GPR_3/6/12_orphan"/>
</dbReference>
<dbReference type="PANTHER" id="PTHR22750">
    <property type="entry name" value="G-PROTEIN COUPLED RECEPTOR"/>
    <property type="match status" value="1"/>
</dbReference>
<dbReference type="Pfam" id="PF00001">
    <property type="entry name" value="7tm_1"/>
    <property type="match status" value="1"/>
</dbReference>
<dbReference type="PRINTS" id="PR00237">
    <property type="entry name" value="GPCRRHODOPSN"/>
</dbReference>
<dbReference type="PRINTS" id="PR00648">
    <property type="entry name" value="GPR3ORPHANR"/>
</dbReference>
<dbReference type="PRINTS" id="PR00644">
    <property type="entry name" value="GPRORPHANR"/>
</dbReference>
<dbReference type="SUPFAM" id="SSF81321">
    <property type="entry name" value="Family A G protein-coupled receptor-like"/>
    <property type="match status" value="1"/>
</dbReference>
<dbReference type="PROSITE" id="PS00237">
    <property type="entry name" value="G_PROTEIN_RECEP_F1_1"/>
    <property type="match status" value="1"/>
</dbReference>
<dbReference type="PROSITE" id="PS50262">
    <property type="entry name" value="G_PROTEIN_RECEP_F1_2"/>
    <property type="match status" value="1"/>
</dbReference>
<name>GPR3_MOUSE</name>
<evidence type="ECO:0000250" key="1"/>
<evidence type="ECO:0000255" key="2"/>
<evidence type="ECO:0000255" key="3">
    <source>
        <dbReference type="PROSITE-ProRule" id="PRU00521"/>
    </source>
</evidence>
<evidence type="ECO:0000269" key="4">
    <source>
    </source>
</evidence>
<evidence type="ECO:0000269" key="5">
    <source>
    </source>
</evidence>
<evidence type="ECO:0000269" key="6">
    <source>
    </source>
</evidence>
<evidence type="ECO:0000269" key="7">
    <source>
    </source>
</evidence>
<evidence type="ECO:0000269" key="8">
    <source>
    </source>
</evidence>
<evidence type="ECO:0000269" key="9">
    <source>
    </source>
</evidence>
<accession>P35413</accession>
<accession>Q3USD4</accession>
<organism>
    <name type="scientific">Mus musculus</name>
    <name type="common">Mouse</name>
    <dbReference type="NCBI Taxonomy" id="10090"/>
    <lineage>
        <taxon>Eukaryota</taxon>
        <taxon>Metazoa</taxon>
        <taxon>Chordata</taxon>
        <taxon>Craniata</taxon>
        <taxon>Vertebrata</taxon>
        <taxon>Euteleostomi</taxon>
        <taxon>Mammalia</taxon>
        <taxon>Eutheria</taxon>
        <taxon>Euarchontoglires</taxon>
        <taxon>Glires</taxon>
        <taxon>Rodentia</taxon>
        <taxon>Myomorpha</taxon>
        <taxon>Muroidea</taxon>
        <taxon>Muridae</taxon>
        <taxon>Murinae</taxon>
        <taxon>Mus</taxon>
        <taxon>Mus</taxon>
    </lineage>
</organism>
<protein>
    <recommendedName>
        <fullName>G-protein coupled receptor 3</fullName>
    </recommendedName>
    <alternativeName>
        <fullName>GPCR21</fullName>
    </alternativeName>
</protein>
<sequence length="330" mass="35453">MMWGAGSSMAWFSAGSGSVNVSSVDPVEEPTGPATLLPSPRAWDVVLCISGTLVSCENALVVAIIVGTPAFRAPMFLLVGSLAVADLLAGLGLVLHFAADFCIGSPEMSLMLVGVLAMAFTASIGSLLAITVDRYLSLYNALTYYSETTVTRTYVMLALVWVGALGLGLVPVLAWNCRDGLTTCGVVYPLSKNHLVVLAIAFFMVFGIMLQLYAQICRIVCRHAQQIALQRHLLPASHYVATRKGIATLAVVLGAFAACWLPFTVYCLLGDADSPRLYTYLTLLPATYNSMINPVIYAFRNQDVQKVLWAICCCCSTSKIPFRSRSPSDV</sequence>
<gene>
    <name type="primary">Gpr3</name>
    <name type="synonym">Gpcr3</name>
</gene>
<feature type="chain" id="PRO_0000069511" description="G-protein coupled receptor 3">
    <location>
        <begin position="1"/>
        <end position="330"/>
    </location>
</feature>
<feature type="topological domain" description="Extracellular" evidence="2">
    <location>
        <begin position="1"/>
        <end position="42"/>
    </location>
</feature>
<feature type="transmembrane region" description="Helical; Name=1" evidence="2">
    <location>
        <begin position="43"/>
        <end position="62"/>
    </location>
</feature>
<feature type="topological domain" description="Cytoplasmic" evidence="2">
    <location>
        <begin position="63"/>
        <end position="74"/>
    </location>
</feature>
<feature type="transmembrane region" description="Helical; Name=2" evidence="2">
    <location>
        <begin position="75"/>
        <end position="98"/>
    </location>
</feature>
<feature type="topological domain" description="Extracellular" evidence="2">
    <location>
        <begin position="99"/>
        <end position="110"/>
    </location>
</feature>
<feature type="transmembrane region" description="Helical; Name=3" evidence="2">
    <location>
        <begin position="111"/>
        <end position="132"/>
    </location>
</feature>
<feature type="topological domain" description="Cytoplasmic" evidence="2">
    <location>
        <begin position="133"/>
        <end position="153"/>
    </location>
</feature>
<feature type="transmembrane region" description="Helical; Name=4" evidence="2">
    <location>
        <begin position="154"/>
        <end position="173"/>
    </location>
</feature>
<feature type="topological domain" description="Extracellular" evidence="2">
    <location>
        <begin position="174"/>
        <end position="198"/>
    </location>
</feature>
<feature type="transmembrane region" description="Helical; Name=5" evidence="2">
    <location>
        <begin position="199"/>
        <end position="217"/>
    </location>
</feature>
<feature type="topological domain" description="Cytoplasmic" evidence="2">
    <location>
        <begin position="218"/>
        <end position="245"/>
    </location>
</feature>
<feature type="transmembrane region" description="Helical; Name=6" evidence="2">
    <location>
        <begin position="246"/>
        <end position="272"/>
    </location>
</feature>
<feature type="topological domain" description="Extracellular" evidence="2">
    <location>
        <begin position="273"/>
        <end position="277"/>
    </location>
</feature>
<feature type="transmembrane region" description="Helical; Name=7" evidence="2">
    <location>
        <begin position="278"/>
        <end position="299"/>
    </location>
</feature>
<feature type="topological domain" description="Cytoplasmic" evidence="2">
    <location>
        <begin position="300"/>
        <end position="330"/>
    </location>
</feature>
<feature type="modified residue" description="Phosphoserine" evidence="2">
    <location>
        <position position="324"/>
    </location>
</feature>
<feature type="modified residue" description="Phosphoserine" evidence="2">
    <location>
        <position position="326"/>
    </location>
</feature>
<feature type="modified residue" description="Phosphoserine" evidence="2">
    <location>
        <position position="328"/>
    </location>
</feature>
<feature type="lipid moiety-binding region" description="S-palmitoyl cysteine" evidence="1">
    <location>
        <position position="313"/>
    </location>
</feature>
<feature type="glycosylation site" description="N-linked (GlcNAc...) asparagine" evidence="2">
    <location>
        <position position="20"/>
    </location>
</feature>
<feature type="mutagenesis site" description="Loss of plasma membrane localization; when associated with A-134." evidence="8">
    <original>D</original>
    <variation>A</variation>
    <location>
        <position position="133"/>
    </location>
</feature>
<feature type="mutagenesis site" description="Loss of plasma membrane localization; when associated with A-133." evidence="8">
    <original>R</original>
    <variation>A</variation>
    <location>
        <position position="134"/>
    </location>
</feature>
<proteinExistence type="evidence at protein level"/>
<comment type="function">
    <text evidence="4 5 6 7 8">Constitutively active G-protein coupled receptor that maintains high 3'-5'-cyclic adenosine monophosphate (cAMP) levels that a plays a role in serveral processes including meiotic arrest in oocytes or neuronal development via activation of numerous intracellular signaling pathways (PubMed:15956199, PubMed:19259266). Acts as an essential activator of thermogenic adipocytes and drives thermogenesis via its intrinsic G(s)-coupling activity without the requirement of a ligand (PubMed:26455425, PubMed:34048700). Has a potential role in modulating a number of brain functions, including behavioral responses to stress, amyloid-beta peptide generation in neurons. Stimulates neurite outgrowth in cerebellar granular neurons modulated via PKA, ERK, and most strongly PI3K-mediated signaling pathways (PubMed:34871769).</text>
</comment>
<comment type="subcellular location">
    <subcellularLocation>
        <location>Cell membrane</location>
        <topology evidence="8">Multi-pass membrane protein</topology>
    </subcellularLocation>
</comment>
<comment type="tissue specificity">
    <text evidence="5 6 9">Expressed in both the forebrain and hindbrain, with the highest level in habenula (PubMed:8262253). Lower level expression in the testis. Expressed in several metabolically active peripheral tissues, although at lower levels than in the central nervous system (CNS) (PubMed:26455425).</text>
</comment>
<comment type="disruption phenotype">
    <text evidence="4 8">Mice are fertile but display progressive reduction in litter size despite a stable age-independent alteration of the meiotic pause, characterized by premature resumption of meiosis in about one-third of antral follicles in mutant females regardless of age. Aging mutant mice had severe reduction of fertility, manifested by an increasing number of nondeveloping early embryos upon spontaneous ovulation and massive amounts of fragmented oocytes after superovulation (PubMed:15956199). Older mice have also reduced total energy expenditure, Hippocampal neurons show delayed polarity formation with an increased DPYSL2 phosphorylation at the neurite tips (PubMed:34871769).</text>
</comment>
<comment type="similarity">
    <text evidence="3">Belongs to the G-protein coupled receptor 1 family.</text>
</comment>
<reference key="1">
    <citation type="journal article" date="1993" name="FEBS Lett.">
        <title>Molecular cloning of a novel putative G protein-coupled receptor (GPCR21) which is expressed predominantly in mouse central nervous system.</title>
        <authorList>
            <person name="Saeki Y."/>
            <person name="Ueno S."/>
            <person name="Mizuno R."/>
            <person name="Nishimura T."/>
            <person name="Fujimura H."/>
            <person name="Nagai Y."/>
            <person name="Yanagihara T."/>
        </authorList>
    </citation>
    <scope>NUCLEOTIDE SEQUENCE [MRNA]</scope>
    <scope>TISSUE SPECIFICITY</scope>
    <source>
        <strain>BALB/cJ</strain>
        <tissue>Brain</tissue>
    </source>
</reference>
<reference key="2">
    <citation type="journal article" date="2005" name="Science">
        <title>The transcriptional landscape of the mammalian genome.</title>
        <authorList>
            <person name="Carninci P."/>
            <person name="Kasukawa T."/>
            <person name="Katayama S."/>
            <person name="Gough J."/>
            <person name="Frith M.C."/>
            <person name="Maeda N."/>
            <person name="Oyama R."/>
            <person name="Ravasi T."/>
            <person name="Lenhard B."/>
            <person name="Wells C."/>
            <person name="Kodzius R."/>
            <person name="Shimokawa K."/>
            <person name="Bajic V.B."/>
            <person name="Brenner S.E."/>
            <person name="Batalov S."/>
            <person name="Forrest A.R."/>
            <person name="Zavolan M."/>
            <person name="Davis M.J."/>
            <person name="Wilming L.G."/>
            <person name="Aidinis V."/>
            <person name="Allen J.E."/>
            <person name="Ambesi-Impiombato A."/>
            <person name="Apweiler R."/>
            <person name="Aturaliya R.N."/>
            <person name="Bailey T.L."/>
            <person name="Bansal M."/>
            <person name="Baxter L."/>
            <person name="Beisel K.W."/>
            <person name="Bersano T."/>
            <person name="Bono H."/>
            <person name="Chalk A.M."/>
            <person name="Chiu K.P."/>
            <person name="Choudhary V."/>
            <person name="Christoffels A."/>
            <person name="Clutterbuck D.R."/>
            <person name="Crowe M.L."/>
            <person name="Dalla E."/>
            <person name="Dalrymple B.P."/>
            <person name="de Bono B."/>
            <person name="Della Gatta G."/>
            <person name="di Bernardo D."/>
            <person name="Down T."/>
            <person name="Engstrom P."/>
            <person name="Fagiolini M."/>
            <person name="Faulkner G."/>
            <person name="Fletcher C.F."/>
            <person name="Fukushima T."/>
            <person name="Furuno M."/>
            <person name="Futaki S."/>
            <person name="Gariboldi M."/>
            <person name="Georgii-Hemming P."/>
            <person name="Gingeras T.R."/>
            <person name="Gojobori T."/>
            <person name="Green R.E."/>
            <person name="Gustincich S."/>
            <person name="Harbers M."/>
            <person name="Hayashi Y."/>
            <person name="Hensch T.K."/>
            <person name="Hirokawa N."/>
            <person name="Hill D."/>
            <person name="Huminiecki L."/>
            <person name="Iacono M."/>
            <person name="Ikeo K."/>
            <person name="Iwama A."/>
            <person name="Ishikawa T."/>
            <person name="Jakt M."/>
            <person name="Kanapin A."/>
            <person name="Katoh M."/>
            <person name="Kawasawa Y."/>
            <person name="Kelso J."/>
            <person name="Kitamura H."/>
            <person name="Kitano H."/>
            <person name="Kollias G."/>
            <person name="Krishnan S.P."/>
            <person name="Kruger A."/>
            <person name="Kummerfeld S.K."/>
            <person name="Kurochkin I.V."/>
            <person name="Lareau L.F."/>
            <person name="Lazarevic D."/>
            <person name="Lipovich L."/>
            <person name="Liu J."/>
            <person name="Liuni S."/>
            <person name="McWilliam S."/>
            <person name="Madan Babu M."/>
            <person name="Madera M."/>
            <person name="Marchionni L."/>
            <person name="Matsuda H."/>
            <person name="Matsuzawa S."/>
            <person name="Miki H."/>
            <person name="Mignone F."/>
            <person name="Miyake S."/>
            <person name="Morris K."/>
            <person name="Mottagui-Tabar S."/>
            <person name="Mulder N."/>
            <person name="Nakano N."/>
            <person name="Nakauchi H."/>
            <person name="Ng P."/>
            <person name="Nilsson R."/>
            <person name="Nishiguchi S."/>
            <person name="Nishikawa S."/>
            <person name="Nori F."/>
            <person name="Ohara O."/>
            <person name="Okazaki Y."/>
            <person name="Orlando V."/>
            <person name="Pang K.C."/>
            <person name="Pavan W.J."/>
            <person name="Pavesi G."/>
            <person name="Pesole G."/>
            <person name="Petrovsky N."/>
            <person name="Piazza S."/>
            <person name="Reed J."/>
            <person name="Reid J.F."/>
            <person name="Ring B.Z."/>
            <person name="Ringwald M."/>
            <person name="Rost B."/>
            <person name="Ruan Y."/>
            <person name="Salzberg S.L."/>
            <person name="Sandelin A."/>
            <person name="Schneider C."/>
            <person name="Schoenbach C."/>
            <person name="Sekiguchi K."/>
            <person name="Semple C.A."/>
            <person name="Seno S."/>
            <person name="Sessa L."/>
            <person name="Sheng Y."/>
            <person name="Shibata Y."/>
            <person name="Shimada H."/>
            <person name="Shimada K."/>
            <person name="Silva D."/>
            <person name="Sinclair B."/>
            <person name="Sperling S."/>
            <person name="Stupka E."/>
            <person name="Sugiura K."/>
            <person name="Sultana R."/>
            <person name="Takenaka Y."/>
            <person name="Taki K."/>
            <person name="Tammoja K."/>
            <person name="Tan S.L."/>
            <person name="Tang S."/>
            <person name="Taylor M.S."/>
            <person name="Tegner J."/>
            <person name="Teichmann S.A."/>
            <person name="Ueda H.R."/>
            <person name="van Nimwegen E."/>
            <person name="Verardo R."/>
            <person name="Wei C.L."/>
            <person name="Yagi K."/>
            <person name="Yamanishi H."/>
            <person name="Zabarovsky E."/>
            <person name="Zhu S."/>
            <person name="Zimmer A."/>
            <person name="Hide W."/>
            <person name="Bult C."/>
            <person name="Grimmond S.M."/>
            <person name="Teasdale R.D."/>
            <person name="Liu E.T."/>
            <person name="Brusic V."/>
            <person name="Quackenbush J."/>
            <person name="Wahlestedt C."/>
            <person name="Mattick J.S."/>
            <person name="Hume D.A."/>
            <person name="Kai C."/>
            <person name="Sasaki D."/>
            <person name="Tomaru Y."/>
            <person name="Fukuda S."/>
            <person name="Kanamori-Katayama M."/>
            <person name="Suzuki M."/>
            <person name="Aoki J."/>
            <person name="Arakawa T."/>
            <person name="Iida J."/>
            <person name="Imamura K."/>
            <person name="Itoh M."/>
            <person name="Kato T."/>
            <person name="Kawaji H."/>
            <person name="Kawagashira N."/>
            <person name="Kawashima T."/>
            <person name="Kojima M."/>
            <person name="Kondo S."/>
            <person name="Konno H."/>
            <person name="Nakano K."/>
            <person name="Ninomiya N."/>
            <person name="Nishio T."/>
            <person name="Okada M."/>
            <person name="Plessy C."/>
            <person name="Shibata K."/>
            <person name="Shiraki T."/>
            <person name="Suzuki S."/>
            <person name="Tagami M."/>
            <person name="Waki K."/>
            <person name="Watahiki A."/>
            <person name="Okamura-Oho Y."/>
            <person name="Suzuki H."/>
            <person name="Kawai J."/>
            <person name="Hayashizaki Y."/>
        </authorList>
    </citation>
    <scope>NUCLEOTIDE SEQUENCE [LARGE SCALE MRNA]</scope>
    <source>
        <strain>C57BL/6J</strain>
        <tissue>Corpora quadrigemina</tissue>
        <tissue>Medulla oblongata</tissue>
        <tissue>Visual cortex</tissue>
    </source>
</reference>
<reference key="3">
    <citation type="journal article" date="2009" name="PLoS Biol.">
        <title>Lineage-specific biology revealed by a finished genome assembly of the mouse.</title>
        <authorList>
            <person name="Church D.M."/>
            <person name="Goodstadt L."/>
            <person name="Hillier L.W."/>
            <person name="Zody M.C."/>
            <person name="Goldstein S."/>
            <person name="She X."/>
            <person name="Bult C.J."/>
            <person name="Agarwala R."/>
            <person name="Cherry J.L."/>
            <person name="DiCuccio M."/>
            <person name="Hlavina W."/>
            <person name="Kapustin Y."/>
            <person name="Meric P."/>
            <person name="Maglott D."/>
            <person name="Birtle Z."/>
            <person name="Marques A.C."/>
            <person name="Graves T."/>
            <person name="Zhou S."/>
            <person name="Teague B."/>
            <person name="Potamousis K."/>
            <person name="Churas C."/>
            <person name="Place M."/>
            <person name="Herschleb J."/>
            <person name="Runnheim R."/>
            <person name="Forrest D."/>
            <person name="Amos-Landgraf J."/>
            <person name="Schwartz D.C."/>
            <person name="Cheng Z."/>
            <person name="Lindblad-Toh K."/>
            <person name="Eichler E.E."/>
            <person name="Ponting C.P."/>
        </authorList>
    </citation>
    <scope>NUCLEOTIDE SEQUENCE [LARGE SCALE GENOMIC DNA]</scope>
    <source>
        <strain>C57BL/6J</strain>
    </source>
</reference>
<reference key="4">
    <citation type="submission" date="2005-09" db="EMBL/GenBank/DDBJ databases">
        <authorList>
            <person name="Mural R.J."/>
            <person name="Adams M.D."/>
            <person name="Myers E.W."/>
            <person name="Smith H.O."/>
            <person name="Venter J.C."/>
        </authorList>
    </citation>
    <scope>NUCLEOTIDE SEQUENCE [LARGE SCALE GENOMIC DNA]</scope>
</reference>
<reference key="5">
    <citation type="journal article" date="2004" name="Genome Res.">
        <title>The status, quality, and expansion of the NIH full-length cDNA project: the Mammalian Gene Collection (MGC).</title>
        <authorList>
            <consortium name="The MGC Project Team"/>
        </authorList>
    </citation>
    <scope>NUCLEOTIDE SEQUENCE [LARGE SCALE MRNA]</scope>
    <source>
        <tissue>Brain</tissue>
    </source>
</reference>
<reference key="6">
    <citation type="journal article" date="2005" name="Proc. Natl. Acad. Sci. U.S.A.">
        <title>Premature ovarian aging in mice deficient for Gpr3.</title>
        <authorList>
            <person name="Ledent C."/>
            <person name="Demeestere I."/>
            <person name="Blum D."/>
            <person name="Petermans J."/>
            <person name="Hamalainen T."/>
            <person name="Smits G."/>
            <person name="Vassart G."/>
        </authorList>
    </citation>
    <scope>DISRUPTION PHENOTYPE</scope>
    <scope>FUNCTION</scope>
</reference>
<reference key="7">
    <citation type="journal article" date="2009" name="PLoS ONE">
        <title>GPR3 receptor, a novel actor in the emotional-like responses.</title>
        <authorList>
            <person name="Valverde O."/>
            <person name="Celerier E."/>
            <person name="Baranyi M."/>
            <person name="Vanderhaeghen P."/>
            <person name="Maldonado R."/>
            <person name="Sperlagh B."/>
            <person name="Vassart G."/>
            <person name="Ledent C."/>
        </authorList>
    </citation>
    <scope>TISSUE SPECIFICITY</scope>
    <scope>FUNCTION</scope>
</reference>
<reference key="8">
    <citation type="journal article" date="2015" name="Sci. Rep.">
        <title>Mice lacking GPR3 receptors display late-onset obese phenotype due to impaired thermogenic function in brown adipose tissue.</title>
        <authorList>
            <person name="Godlewski G."/>
            <person name="Jourdan T."/>
            <person name="Szanda G."/>
            <person name="Tam J."/>
            <person name="Cinar R."/>
            <person name="Harvey-White J."/>
            <person name="Liu J."/>
            <person name="Mukhopadhyay B."/>
            <person name="Pacher P."/>
            <person name="Ming Mo F."/>
            <person name="Osei-Hyiaman D."/>
            <person name="Kunos G."/>
        </authorList>
    </citation>
    <scope>FUNCTION</scope>
    <scope>DISRUPTION PHENOTYPE</scope>
    <scope>TISSUE SPECIFICITY</scope>
</reference>
<reference key="9">
    <citation type="journal article" date="2021" name="Cell">
        <title>Lipolysis drives expression of the constitutively active receptor GPR3 to induce adipose thermogenesis.</title>
        <authorList>
            <person name="Sveidahl Johansen O."/>
            <person name="Ma T."/>
            <person name="Hansen J.B."/>
            <person name="Markussen L.K."/>
            <person name="Schreiber R."/>
            <person name="Reverte-Salisa L."/>
            <person name="Dong H."/>
            <person name="Christensen D.P."/>
            <person name="Sun W."/>
            <person name="Gnad T."/>
            <person name="Karavaeva I."/>
            <person name="Nielsen T.S."/>
            <person name="Kooijman S."/>
            <person name="Cero C."/>
            <person name="Dmytriyeva O."/>
            <person name="Shen Y."/>
            <person name="Razzoli M."/>
            <person name="O'Brien S.L."/>
            <person name="Kuipers E.N."/>
            <person name="Nielsen C.H."/>
            <person name="Orchard W."/>
            <person name="Willemsen N."/>
            <person name="Jespersen N.Z."/>
            <person name="Lundh M."/>
            <person name="Sustarsic E.G."/>
            <person name="Hallgren C.M."/>
            <person name="Frost M."/>
            <person name="McGonigle S."/>
            <person name="Isidor M.S."/>
            <person name="Broholm C."/>
            <person name="Pedersen O."/>
            <person name="Hansen J.B."/>
            <person name="Grarup N."/>
            <person name="Hansen T."/>
            <person name="Kjaer A."/>
            <person name="Granneman J.G."/>
            <person name="Babu M.M."/>
            <person name="Calebiro D."/>
            <person name="Nielsen S."/>
            <person name="Ryden M."/>
            <person name="Soccio R."/>
            <person name="Rensen P.C.N."/>
            <person name="Treebak J.T."/>
            <person name="Schwartz T.W."/>
            <person name="Emanuelli B."/>
            <person name="Bartolomucci A."/>
            <person name="Pfeifer A."/>
            <person name="Zechner R."/>
            <person name="Scheele C."/>
            <person name="Mandrup S."/>
            <person name="Gerhart-Hines Z."/>
        </authorList>
    </citation>
    <scope>FUNCTION</scope>
</reference>
<reference key="10">
    <citation type="journal article" date="2022" name="Mol. Cell. Neurosci.">
        <title>GPR3 accelerates neurite outgrowth and neuronal polarity formation via PI3 kinase-mediating signaling pathway in cultured primary neurons.</title>
        <authorList>
            <person name="Tanaka S."/>
            <person name="Shimada N."/>
            <person name="Shiraki H."/>
            <person name="Miyagi T."/>
            <person name="Harada K."/>
            <person name="Hide I."/>
            <person name="Sakai N."/>
        </authorList>
    </citation>
    <scope>FUNCTION</scope>
    <scope>DISRUPTION PHENOTYPE</scope>
    <scope>SUBCELLULAR LOCATION</scope>
    <scope>MUTAGENESIS OF ASP-133 AND ARG-134</scope>
</reference>
<keyword id="KW-1003">Cell membrane</keyword>
<keyword id="KW-0297">G-protein coupled receptor</keyword>
<keyword id="KW-0325">Glycoprotein</keyword>
<keyword id="KW-0449">Lipoprotein</keyword>
<keyword id="KW-0472">Membrane</keyword>
<keyword id="KW-0564">Palmitate</keyword>
<keyword id="KW-0597">Phosphoprotein</keyword>
<keyword id="KW-0675">Receptor</keyword>
<keyword id="KW-1185">Reference proteome</keyword>
<keyword id="KW-0807">Transducer</keyword>
<keyword id="KW-0812">Transmembrane</keyword>
<keyword id="KW-1133">Transmembrane helix</keyword>